<dbReference type="EC" id="5.3.1.-" evidence="1"/>
<dbReference type="EMBL" id="CP000726">
    <property type="protein sequence ID" value="ABS34760.1"/>
    <property type="molecule type" value="Genomic_DNA"/>
</dbReference>
<dbReference type="SMR" id="A7FTE6"/>
<dbReference type="KEGG" id="cba:CLB_1296"/>
<dbReference type="HOGENOM" id="CLU_016218_1_2_9"/>
<dbReference type="GO" id="GO:0046523">
    <property type="term" value="F:S-methyl-5-thioribose-1-phosphate isomerase activity"/>
    <property type="evidence" value="ECO:0007669"/>
    <property type="project" value="InterPro"/>
</dbReference>
<dbReference type="GO" id="GO:0019509">
    <property type="term" value="P:L-methionine salvage from methylthioadenosine"/>
    <property type="evidence" value="ECO:0007669"/>
    <property type="project" value="TreeGrafter"/>
</dbReference>
<dbReference type="GO" id="GO:0019323">
    <property type="term" value="P:pentose catabolic process"/>
    <property type="evidence" value="ECO:0007669"/>
    <property type="project" value="UniProtKB-UniRule"/>
</dbReference>
<dbReference type="FunFam" id="1.20.120.420:FF:000001">
    <property type="entry name" value="Methylthioribose-1-phosphate isomerase"/>
    <property type="match status" value="1"/>
</dbReference>
<dbReference type="FunFam" id="3.40.50.10470:FF:000006">
    <property type="entry name" value="Methylthioribose-1-phosphate isomerase"/>
    <property type="match status" value="1"/>
</dbReference>
<dbReference type="Gene3D" id="1.20.120.420">
    <property type="entry name" value="translation initiation factor eif-2b, domain 1"/>
    <property type="match status" value="1"/>
</dbReference>
<dbReference type="Gene3D" id="3.40.50.10470">
    <property type="entry name" value="Translation initiation factor eif-2b, domain 2"/>
    <property type="match status" value="1"/>
</dbReference>
<dbReference type="HAMAP" id="MF_02229">
    <property type="entry name" value="Deoxyribose1P_isomerase"/>
    <property type="match status" value="1"/>
</dbReference>
<dbReference type="HAMAP" id="MF_01678">
    <property type="entry name" value="Salvage_MtnA"/>
    <property type="match status" value="1"/>
</dbReference>
<dbReference type="InterPro" id="IPR043679">
    <property type="entry name" value="Deoxyribose1P_isomerase_DrdI"/>
</dbReference>
<dbReference type="InterPro" id="IPR000649">
    <property type="entry name" value="IF-2B-related"/>
</dbReference>
<dbReference type="InterPro" id="IPR005251">
    <property type="entry name" value="IF-M1Pi"/>
</dbReference>
<dbReference type="InterPro" id="IPR042529">
    <property type="entry name" value="IF_2B-like_C"/>
</dbReference>
<dbReference type="InterPro" id="IPR011559">
    <property type="entry name" value="Initiation_fac_2B_a/b/d"/>
</dbReference>
<dbReference type="InterPro" id="IPR027363">
    <property type="entry name" value="M1Pi_N"/>
</dbReference>
<dbReference type="InterPro" id="IPR037171">
    <property type="entry name" value="NagB/RpiA_transferase-like"/>
</dbReference>
<dbReference type="NCBIfam" id="TIGR00524">
    <property type="entry name" value="eIF-2B_rel"/>
    <property type="match status" value="1"/>
</dbReference>
<dbReference type="NCBIfam" id="NF004326">
    <property type="entry name" value="PRK05720.1"/>
    <property type="match status" value="1"/>
</dbReference>
<dbReference type="NCBIfam" id="TIGR00512">
    <property type="entry name" value="salvage_mtnA"/>
    <property type="match status" value="1"/>
</dbReference>
<dbReference type="PANTHER" id="PTHR43475">
    <property type="entry name" value="METHYLTHIORIBOSE-1-PHOSPHATE ISOMERASE"/>
    <property type="match status" value="1"/>
</dbReference>
<dbReference type="PANTHER" id="PTHR43475:SF1">
    <property type="entry name" value="METHYLTHIORIBOSE-1-PHOSPHATE ISOMERASE"/>
    <property type="match status" value="1"/>
</dbReference>
<dbReference type="Pfam" id="PF01008">
    <property type="entry name" value="IF-2B"/>
    <property type="match status" value="1"/>
</dbReference>
<dbReference type="SUPFAM" id="SSF100950">
    <property type="entry name" value="NagB/RpiA/CoA transferase-like"/>
    <property type="match status" value="1"/>
</dbReference>
<feature type="chain" id="PRO_0000357162" description="5-deoxyribose 1-phosphate isomerase">
    <location>
        <begin position="1"/>
        <end position="349"/>
    </location>
</feature>
<feature type="active site" description="Proton donor" evidence="1">
    <location>
        <position position="240"/>
    </location>
</feature>
<feature type="binding site" evidence="1">
    <location>
        <begin position="49"/>
        <end position="51"/>
    </location>
    <ligand>
        <name>substrate</name>
    </ligand>
</feature>
<feature type="binding site" evidence="1">
    <location>
        <position position="92"/>
    </location>
    <ligand>
        <name>substrate</name>
    </ligand>
</feature>
<feature type="binding site" evidence="1">
    <location>
        <position position="199"/>
    </location>
    <ligand>
        <name>substrate</name>
    </ligand>
</feature>
<feature type="binding site" evidence="1">
    <location>
        <begin position="250"/>
        <end position="251"/>
    </location>
    <ligand>
        <name>substrate</name>
    </ligand>
</feature>
<feature type="site" description="Transition state stabilizer" evidence="1">
    <location>
        <position position="160"/>
    </location>
</feature>
<keyword id="KW-0119">Carbohydrate metabolism</keyword>
<keyword id="KW-0413">Isomerase</keyword>
<proteinExistence type="inferred from homology"/>
<protein>
    <recommendedName>
        <fullName evidence="1">5-deoxyribose 1-phosphate isomerase</fullName>
        <ecNumber evidence="1">5.3.1.-</ecNumber>
    </recommendedName>
</protein>
<accession>A7FTE6</accession>
<evidence type="ECO:0000255" key="1">
    <source>
        <dbReference type="HAMAP-Rule" id="MF_02229"/>
    </source>
</evidence>
<comment type="function">
    <text evidence="1">Catalyzes the isomerization of 5-deoxy-alpha-D-ribose 1-phosphate to 5-deoxy-D-ribulose 1-phosphate, as part of a 5-deoxyribose salvage pathway that recycles this toxic radical SAM enzyme by-product to mainstream metabolites.</text>
</comment>
<comment type="catalytic activity">
    <reaction evidence="1">
        <text>5-deoxy-alpha-D-ribose 1-phosphate = 5-deoxy-D-ribulose 1-phosphate</text>
        <dbReference type="Rhea" id="RHEA:61296"/>
        <dbReference type="ChEBI" id="CHEBI:58749"/>
        <dbReference type="ChEBI" id="CHEBI:144504"/>
    </reaction>
    <physiologicalReaction direction="left-to-right" evidence="1">
        <dbReference type="Rhea" id="RHEA:61297"/>
    </physiologicalReaction>
</comment>
<comment type="pathway">
    <text evidence="1">Carbohydrate degradation.</text>
</comment>
<comment type="similarity">
    <text evidence="1">Belongs to the EIF-2B alpha/beta/delta subunits family. DrdI subfamily.</text>
</comment>
<sequence>MAELLAIKWDDNRDKLILLDQTILPNKIEYIEYDTAEGVYDSIKDMIVRGAPAIGVTAAYGLYFAAKVAPEDKFENFFKYLKEKSSYLDSSRPTAVNLSWALKVMESKALENKDKDVKEIKSILREEAKRIHEEDIEICKTIGENLITLLKDGVGILTHCNAGQLATSKYGTATSPMYLAKEKGWNFKVYSDETRPRLQGSTLTALELYEAGIDVTTITDNMAAMVMSQGKIDAVIVGCDRIAANGDTANKIGTMGVSILAKYFGIPMYIAAPTPSIDINTKTGEDIPIEERNPEEVTSRFGVWTAPKGVKVYNPGFDVTPHENITAIVTEKGIVYPPFKENLKKLFEK</sequence>
<gene>
    <name evidence="1" type="primary">drdI</name>
    <name type="ordered locus">CLB_1296</name>
</gene>
<organism>
    <name type="scientific">Clostridium botulinum (strain ATCC 19397 / Type A)</name>
    <dbReference type="NCBI Taxonomy" id="441770"/>
    <lineage>
        <taxon>Bacteria</taxon>
        <taxon>Bacillati</taxon>
        <taxon>Bacillota</taxon>
        <taxon>Clostridia</taxon>
        <taxon>Eubacteriales</taxon>
        <taxon>Clostridiaceae</taxon>
        <taxon>Clostridium</taxon>
    </lineage>
</organism>
<reference key="1">
    <citation type="journal article" date="2007" name="PLoS ONE">
        <title>Analysis of the neurotoxin complex genes in Clostridium botulinum A1-A4 and B1 strains: BoNT/A3, /Ba4 and /B1 clusters are located within plasmids.</title>
        <authorList>
            <person name="Smith T.J."/>
            <person name="Hill K.K."/>
            <person name="Foley B.T."/>
            <person name="Detter J.C."/>
            <person name="Munk A.C."/>
            <person name="Bruce D.C."/>
            <person name="Doggett N.A."/>
            <person name="Smith L.A."/>
            <person name="Marks J.D."/>
            <person name="Xie G."/>
            <person name="Brettin T.S."/>
        </authorList>
    </citation>
    <scope>NUCLEOTIDE SEQUENCE [LARGE SCALE GENOMIC DNA]</scope>
    <source>
        <strain>ATCC 19397 / Type A</strain>
    </source>
</reference>
<name>DRDI_CLOB1</name>